<accession>O34294</accession>
<accession>Q2K202</accession>
<keyword id="KW-0460">Magnesium</keyword>
<keyword id="KW-0479">Metal-binding</keyword>
<keyword id="KW-0614">Plasmid</keyword>
<keyword id="KW-1185">Reference proteome</keyword>
<keyword id="KW-0784">Thiamine biosynthesis</keyword>
<keyword id="KW-0808">Transferase</keyword>
<proteinExistence type="inferred from homology"/>
<geneLocation type="plasmid">
    <name>p42b</name>
</geneLocation>
<gene>
    <name evidence="1" type="primary">thiE</name>
    <name type="ordered locus">RHE_PB00079</name>
</gene>
<evidence type="ECO:0000255" key="1">
    <source>
        <dbReference type="HAMAP-Rule" id="MF_00097"/>
    </source>
</evidence>
<reference key="1">
    <citation type="journal article" date="1997" name="J. Bacteriol.">
        <title>Expression of thiamin biosynthetic genes (thiCOGE) and production of symbiotic terminal oxidase cbb3 in Rhizobium etli.</title>
        <authorList>
            <person name="Miranda-Rios J."/>
            <person name="Morera C."/>
            <person name="Taboada H."/>
            <person name="Davalos A."/>
            <person name="Encarnacion S."/>
            <person name="Mora J."/>
            <person name="Soberon M."/>
        </authorList>
    </citation>
    <scope>NUCLEOTIDE SEQUENCE [GENOMIC DNA]</scope>
    <source>
        <strain>CE3</strain>
    </source>
</reference>
<reference key="2">
    <citation type="journal article" date="2006" name="Proc. Natl. Acad. Sci. U.S.A.">
        <title>The partitioned Rhizobium etli genome: genetic and metabolic redundancy in seven interacting replicons.</title>
        <authorList>
            <person name="Gonzalez V."/>
            <person name="Santamaria R.I."/>
            <person name="Bustos P."/>
            <person name="Hernandez-Gonzalez I."/>
            <person name="Medrano-Soto A."/>
            <person name="Moreno-Hagelsieb G."/>
            <person name="Janga S.C."/>
            <person name="Ramirez M.A."/>
            <person name="Jimenez-Jacinto V."/>
            <person name="Collado-Vides J."/>
            <person name="Davila G."/>
        </authorList>
    </citation>
    <scope>NUCLEOTIDE SEQUENCE [LARGE SCALE GENOMIC DNA]</scope>
    <source>
        <strain>ATCC 51251 / DSM 11541 / JCM 21823 / NBRC 15573 / CFN 42</strain>
    </source>
</reference>
<sequence>MRLDPFYLIVDSADWVERLVPLGVKLVQLRIKDRPEPVLREEIRRAKAACAAAACQLIINDYWRLAIDEGCDFIHLGQEDLMAADLAAIRRAGLKLGLSTHDPSELETALAAAPDYVALGPVWPTILKEMKWAPQGVERLADWRRRVGPMPLVAIGGITAERAPLVLENGADSAAVVTDITRNPDPEARTRQWLAATAPWRSVG</sequence>
<dbReference type="EC" id="2.5.1.3" evidence="1"/>
<dbReference type="EMBL" id="AF004408">
    <property type="protein sequence ID" value="AAC45975.1"/>
    <property type="molecule type" value="Genomic_DNA"/>
</dbReference>
<dbReference type="EMBL" id="CP000135">
    <property type="protein sequence ID" value="ABC93121.1"/>
    <property type="molecule type" value="Genomic_DNA"/>
</dbReference>
<dbReference type="PIR" id="T44257">
    <property type="entry name" value="T44257"/>
</dbReference>
<dbReference type="RefSeq" id="WP_011427543.1">
    <property type="nucleotide sequence ID" value="NC_007763.1"/>
</dbReference>
<dbReference type="SMR" id="O34294"/>
<dbReference type="KEGG" id="ret:RHE_PB00079"/>
<dbReference type="HOGENOM" id="CLU_018272_3_3_5"/>
<dbReference type="OrthoDB" id="9794842at2"/>
<dbReference type="UniPathway" id="UPA00060">
    <property type="reaction ID" value="UER00141"/>
</dbReference>
<dbReference type="Proteomes" id="UP000001936">
    <property type="component" value="Plasmid p42b"/>
</dbReference>
<dbReference type="GO" id="GO:0005737">
    <property type="term" value="C:cytoplasm"/>
    <property type="evidence" value="ECO:0007669"/>
    <property type="project" value="TreeGrafter"/>
</dbReference>
<dbReference type="GO" id="GO:0000287">
    <property type="term" value="F:magnesium ion binding"/>
    <property type="evidence" value="ECO:0007669"/>
    <property type="project" value="UniProtKB-UniRule"/>
</dbReference>
<dbReference type="GO" id="GO:0004789">
    <property type="term" value="F:thiamine-phosphate diphosphorylase activity"/>
    <property type="evidence" value="ECO:0007669"/>
    <property type="project" value="UniProtKB-UniRule"/>
</dbReference>
<dbReference type="GO" id="GO:0009228">
    <property type="term" value="P:thiamine biosynthetic process"/>
    <property type="evidence" value="ECO:0007669"/>
    <property type="project" value="UniProtKB-KW"/>
</dbReference>
<dbReference type="GO" id="GO:0009229">
    <property type="term" value="P:thiamine diphosphate biosynthetic process"/>
    <property type="evidence" value="ECO:0007669"/>
    <property type="project" value="UniProtKB-UniRule"/>
</dbReference>
<dbReference type="CDD" id="cd00564">
    <property type="entry name" value="TMP_TenI"/>
    <property type="match status" value="1"/>
</dbReference>
<dbReference type="Gene3D" id="3.20.20.70">
    <property type="entry name" value="Aldolase class I"/>
    <property type="match status" value="1"/>
</dbReference>
<dbReference type="HAMAP" id="MF_00097">
    <property type="entry name" value="TMP_synthase"/>
    <property type="match status" value="1"/>
</dbReference>
<dbReference type="InterPro" id="IPR013785">
    <property type="entry name" value="Aldolase_TIM"/>
</dbReference>
<dbReference type="InterPro" id="IPR036206">
    <property type="entry name" value="ThiamineP_synth_sf"/>
</dbReference>
<dbReference type="InterPro" id="IPR022998">
    <property type="entry name" value="ThiamineP_synth_TenI"/>
</dbReference>
<dbReference type="InterPro" id="IPR034291">
    <property type="entry name" value="TMP_synthase"/>
</dbReference>
<dbReference type="NCBIfam" id="NF000734">
    <property type="entry name" value="PRK00043.1-5"/>
    <property type="match status" value="1"/>
</dbReference>
<dbReference type="NCBIfam" id="TIGR00693">
    <property type="entry name" value="thiE"/>
    <property type="match status" value="1"/>
</dbReference>
<dbReference type="PANTHER" id="PTHR20857">
    <property type="entry name" value="THIAMINE-PHOSPHATE PYROPHOSPHORYLASE"/>
    <property type="match status" value="1"/>
</dbReference>
<dbReference type="PANTHER" id="PTHR20857:SF15">
    <property type="entry name" value="THIAMINE-PHOSPHATE SYNTHASE"/>
    <property type="match status" value="1"/>
</dbReference>
<dbReference type="Pfam" id="PF02581">
    <property type="entry name" value="TMP-TENI"/>
    <property type="match status" value="1"/>
</dbReference>
<dbReference type="SUPFAM" id="SSF51391">
    <property type="entry name" value="Thiamin phosphate synthase"/>
    <property type="match status" value="1"/>
</dbReference>
<name>THIE_RHIEC</name>
<organism>
    <name type="scientific">Rhizobium etli (strain ATCC 51251 / DSM 11541 / JCM 21823 / NBRC 15573 / CFN 42)</name>
    <dbReference type="NCBI Taxonomy" id="347834"/>
    <lineage>
        <taxon>Bacteria</taxon>
        <taxon>Pseudomonadati</taxon>
        <taxon>Pseudomonadota</taxon>
        <taxon>Alphaproteobacteria</taxon>
        <taxon>Hyphomicrobiales</taxon>
        <taxon>Rhizobiaceae</taxon>
        <taxon>Rhizobium/Agrobacterium group</taxon>
        <taxon>Rhizobium</taxon>
    </lineage>
</organism>
<comment type="function">
    <text evidence="1">Condenses 4-methyl-5-(beta-hydroxyethyl)thiazole monophosphate (THZ-P) and 2-methyl-4-amino-5-hydroxymethyl pyrimidine pyrophosphate (HMP-PP) to form thiamine monophosphate (TMP).</text>
</comment>
<comment type="catalytic activity">
    <reaction evidence="1">
        <text>2-[(2R,5Z)-2-carboxy-4-methylthiazol-5(2H)-ylidene]ethyl phosphate + 4-amino-2-methyl-5-(diphosphooxymethyl)pyrimidine + 2 H(+) = thiamine phosphate + CO2 + diphosphate</text>
        <dbReference type="Rhea" id="RHEA:47844"/>
        <dbReference type="ChEBI" id="CHEBI:15378"/>
        <dbReference type="ChEBI" id="CHEBI:16526"/>
        <dbReference type="ChEBI" id="CHEBI:33019"/>
        <dbReference type="ChEBI" id="CHEBI:37575"/>
        <dbReference type="ChEBI" id="CHEBI:57841"/>
        <dbReference type="ChEBI" id="CHEBI:62899"/>
        <dbReference type="EC" id="2.5.1.3"/>
    </reaction>
</comment>
<comment type="catalytic activity">
    <reaction evidence="1">
        <text>2-(2-carboxy-4-methylthiazol-5-yl)ethyl phosphate + 4-amino-2-methyl-5-(diphosphooxymethyl)pyrimidine + 2 H(+) = thiamine phosphate + CO2 + diphosphate</text>
        <dbReference type="Rhea" id="RHEA:47848"/>
        <dbReference type="ChEBI" id="CHEBI:15378"/>
        <dbReference type="ChEBI" id="CHEBI:16526"/>
        <dbReference type="ChEBI" id="CHEBI:33019"/>
        <dbReference type="ChEBI" id="CHEBI:37575"/>
        <dbReference type="ChEBI" id="CHEBI:57841"/>
        <dbReference type="ChEBI" id="CHEBI:62890"/>
        <dbReference type="EC" id="2.5.1.3"/>
    </reaction>
</comment>
<comment type="catalytic activity">
    <reaction evidence="1">
        <text>4-methyl-5-(2-phosphooxyethyl)-thiazole + 4-amino-2-methyl-5-(diphosphooxymethyl)pyrimidine + H(+) = thiamine phosphate + diphosphate</text>
        <dbReference type="Rhea" id="RHEA:22328"/>
        <dbReference type="ChEBI" id="CHEBI:15378"/>
        <dbReference type="ChEBI" id="CHEBI:33019"/>
        <dbReference type="ChEBI" id="CHEBI:37575"/>
        <dbReference type="ChEBI" id="CHEBI:57841"/>
        <dbReference type="ChEBI" id="CHEBI:58296"/>
        <dbReference type="EC" id="2.5.1.3"/>
    </reaction>
</comment>
<comment type="cofactor">
    <cofactor evidence="1">
        <name>Mg(2+)</name>
        <dbReference type="ChEBI" id="CHEBI:18420"/>
    </cofactor>
    <text evidence="1">Binds 1 Mg(2+) ion per subunit.</text>
</comment>
<comment type="pathway">
    <text evidence="1">Cofactor biosynthesis; thiamine diphosphate biosynthesis; thiamine phosphate from 4-amino-2-methyl-5-diphosphomethylpyrimidine and 4-methyl-5-(2-phosphoethyl)-thiazole: step 1/1.</text>
</comment>
<comment type="similarity">
    <text evidence="1">Belongs to the thiamine-phosphate synthase family.</text>
</comment>
<feature type="chain" id="PRO_0000157038" description="Thiamine-phosphate synthase">
    <location>
        <begin position="1"/>
        <end position="204"/>
    </location>
</feature>
<feature type="binding site" evidence="1">
    <location>
        <begin position="28"/>
        <end position="32"/>
    </location>
    <ligand>
        <name>4-amino-2-methyl-5-(diphosphooxymethyl)pyrimidine</name>
        <dbReference type="ChEBI" id="CHEBI:57841"/>
    </ligand>
</feature>
<feature type="binding site" evidence="1">
    <location>
        <position position="60"/>
    </location>
    <ligand>
        <name>4-amino-2-methyl-5-(diphosphooxymethyl)pyrimidine</name>
        <dbReference type="ChEBI" id="CHEBI:57841"/>
    </ligand>
</feature>
<feature type="binding site" evidence="1">
    <location>
        <position position="61"/>
    </location>
    <ligand>
        <name>Mg(2+)</name>
        <dbReference type="ChEBI" id="CHEBI:18420"/>
    </ligand>
</feature>
<feature type="binding site" evidence="1">
    <location>
        <position position="80"/>
    </location>
    <ligand>
        <name>Mg(2+)</name>
        <dbReference type="ChEBI" id="CHEBI:18420"/>
    </ligand>
</feature>
<feature type="binding site" evidence="1">
    <location>
        <position position="99"/>
    </location>
    <ligand>
        <name>4-amino-2-methyl-5-(diphosphooxymethyl)pyrimidine</name>
        <dbReference type="ChEBI" id="CHEBI:57841"/>
    </ligand>
</feature>
<feature type="binding site" evidence="1">
    <location>
        <position position="128"/>
    </location>
    <ligand>
        <name>4-amino-2-methyl-5-(diphosphooxymethyl)pyrimidine</name>
        <dbReference type="ChEBI" id="CHEBI:57841"/>
    </ligand>
</feature>
<feature type="binding site" evidence="1">
    <location>
        <position position="157"/>
    </location>
    <ligand>
        <name>2-[(2R,5Z)-2-carboxy-4-methylthiazol-5(2H)-ylidene]ethyl phosphate</name>
        <dbReference type="ChEBI" id="CHEBI:62899"/>
    </ligand>
</feature>
<feature type="binding site" evidence="1">
    <location>
        <begin position="177"/>
        <end position="178"/>
    </location>
    <ligand>
        <name>2-[(2R,5Z)-2-carboxy-4-methylthiazol-5(2H)-ylidene]ethyl phosphate</name>
        <dbReference type="ChEBI" id="CHEBI:62899"/>
    </ligand>
</feature>
<protein>
    <recommendedName>
        <fullName evidence="1">Thiamine-phosphate synthase</fullName>
        <shortName evidence="1">TP synthase</shortName>
        <shortName evidence="1">TPS</shortName>
        <ecNumber evidence="1">2.5.1.3</ecNumber>
    </recommendedName>
    <alternativeName>
        <fullName evidence="1">Thiamine-phosphate pyrophosphorylase</fullName>
        <shortName evidence="1">TMP pyrophosphorylase</shortName>
        <shortName evidence="1">TMP-PPase</shortName>
    </alternativeName>
</protein>